<dbReference type="PIR" id="A02411">
    <property type="entry name" value="HBGP"/>
</dbReference>
<dbReference type="PDB" id="3A0G">
    <property type="method" value="X-ray"/>
    <property type="resolution" value="2.50 A"/>
    <property type="chains" value="B=1-146"/>
</dbReference>
<dbReference type="PDB" id="3HYU">
    <property type="method" value="X-ray"/>
    <property type="resolution" value="1.67 A"/>
    <property type="chains" value="B=1-146"/>
</dbReference>
<dbReference type="PDBsum" id="3A0G"/>
<dbReference type="PDBsum" id="3HYU"/>
<dbReference type="SMR" id="P02095"/>
<dbReference type="FunCoup" id="P02095">
    <property type="interactions" value="143"/>
</dbReference>
<dbReference type="STRING" id="10141.ENSCPOP00000001378"/>
<dbReference type="eggNOG" id="KOG3378">
    <property type="taxonomic scope" value="Eukaryota"/>
</dbReference>
<dbReference type="InParanoid" id="P02095"/>
<dbReference type="EvolutionaryTrace" id="P02095"/>
<dbReference type="Proteomes" id="UP000005447">
    <property type="component" value="Unassembled WGS sequence"/>
</dbReference>
<dbReference type="GO" id="GO:0072562">
    <property type="term" value="C:blood microparticle"/>
    <property type="evidence" value="ECO:0007669"/>
    <property type="project" value="TreeGrafter"/>
</dbReference>
<dbReference type="GO" id="GO:0031838">
    <property type="term" value="C:haptoglobin-hemoglobin complex"/>
    <property type="evidence" value="ECO:0007669"/>
    <property type="project" value="TreeGrafter"/>
</dbReference>
<dbReference type="GO" id="GO:0005833">
    <property type="term" value="C:hemoglobin complex"/>
    <property type="evidence" value="ECO:0007669"/>
    <property type="project" value="InterPro"/>
</dbReference>
<dbReference type="GO" id="GO:0031720">
    <property type="term" value="F:haptoglobin binding"/>
    <property type="evidence" value="ECO:0007669"/>
    <property type="project" value="TreeGrafter"/>
</dbReference>
<dbReference type="GO" id="GO:0020037">
    <property type="term" value="F:heme binding"/>
    <property type="evidence" value="ECO:0007669"/>
    <property type="project" value="InterPro"/>
</dbReference>
<dbReference type="GO" id="GO:0031721">
    <property type="term" value="F:hemoglobin alpha binding"/>
    <property type="evidence" value="ECO:0007669"/>
    <property type="project" value="TreeGrafter"/>
</dbReference>
<dbReference type="GO" id="GO:0046872">
    <property type="term" value="F:metal ion binding"/>
    <property type="evidence" value="ECO:0007669"/>
    <property type="project" value="UniProtKB-KW"/>
</dbReference>
<dbReference type="GO" id="GO:0043177">
    <property type="term" value="F:organic acid binding"/>
    <property type="evidence" value="ECO:0007669"/>
    <property type="project" value="TreeGrafter"/>
</dbReference>
<dbReference type="GO" id="GO:0019825">
    <property type="term" value="F:oxygen binding"/>
    <property type="evidence" value="ECO:0007669"/>
    <property type="project" value="InterPro"/>
</dbReference>
<dbReference type="GO" id="GO:0005344">
    <property type="term" value="F:oxygen carrier activity"/>
    <property type="evidence" value="ECO:0007669"/>
    <property type="project" value="UniProtKB-KW"/>
</dbReference>
<dbReference type="GO" id="GO:0004601">
    <property type="term" value="F:peroxidase activity"/>
    <property type="evidence" value="ECO:0007669"/>
    <property type="project" value="TreeGrafter"/>
</dbReference>
<dbReference type="GO" id="GO:0042744">
    <property type="term" value="P:hydrogen peroxide catabolic process"/>
    <property type="evidence" value="ECO:0007669"/>
    <property type="project" value="TreeGrafter"/>
</dbReference>
<dbReference type="CDD" id="cd08925">
    <property type="entry name" value="Hb-beta-like"/>
    <property type="match status" value="1"/>
</dbReference>
<dbReference type="FunFam" id="1.10.490.10:FF:000001">
    <property type="entry name" value="Hemoglobin subunit beta"/>
    <property type="match status" value="1"/>
</dbReference>
<dbReference type="Gene3D" id="1.10.490.10">
    <property type="entry name" value="Globins"/>
    <property type="match status" value="1"/>
</dbReference>
<dbReference type="InterPro" id="IPR000971">
    <property type="entry name" value="Globin"/>
</dbReference>
<dbReference type="InterPro" id="IPR009050">
    <property type="entry name" value="Globin-like_sf"/>
</dbReference>
<dbReference type="InterPro" id="IPR012292">
    <property type="entry name" value="Globin/Proto"/>
</dbReference>
<dbReference type="InterPro" id="IPR002337">
    <property type="entry name" value="Hemoglobin_b"/>
</dbReference>
<dbReference type="InterPro" id="IPR050056">
    <property type="entry name" value="Hemoglobin_oxygen_transport"/>
</dbReference>
<dbReference type="PANTHER" id="PTHR11442">
    <property type="entry name" value="HEMOGLOBIN FAMILY MEMBER"/>
    <property type="match status" value="1"/>
</dbReference>
<dbReference type="PANTHER" id="PTHR11442:SF42">
    <property type="entry name" value="HEMOGLOBIN SUBUNIT BETA"/>
    <property type="match status" value="1"/>
</dbReference>
<dbReference type="Pfam" id="PF00042">
    <property type="entry name" value="Globin"/>
    <property type="match status" value="1"/>
</dbReference>
<dbReference type="PRINTS" id="PR00814">
    <property type="entry name" value="BETAHAEM"/>
</dbReference>
<dbReference type="SUPFAM" id="SSF46458">
    <property type="entry name" value="Globin-like"/>
    <property type="match status" value="1"/>
</dbReference>
<dbReference type="PROSITE" id="PS01033">
    <property type="entry name" value="GLOBIN"/>
    <property type="match status" value="1"/>
</dbReference>
<gene>
    <name type="primary">HBB</name>
</gene>
<name>HBB_CAVPO</name>
<accession>P02095</accession>
<comment type="function">
    <text>Involved in oxygen transport from the lung to the various peripheral tissues.</text>
</comment>
<comment type="subunit">
    <text evidence="4">Heterotetramer of two alpha chains and two beta chains.</text>
</comment>
<comment type="tissue specificity">
    <text>Red blood cells.</text>
</comment>
<comment type="similarity">
    <text evidence="3">Belongs to the globin family.</text>
</comment>
<sequence length="146" mass="15921">VHLTAAEKSAILDLWGKVNVGEIGAEALGRLLVVYPWTQRFFEKFGDLSSASAIMSNAHVKSHGAKVLASFSEGLKHLQDLKGTFAKLSELHCDKLHVDPENFRLLGNMIVIALAHHHPSEFTPCTQAAFQKVTAGVANALAHKYH</sequence>
<protein>
    <recommendedName>
        <fullName>Hemoglobin subunit beta</fullName>
    </recommendedName>
    <alternativeName>
        <fullName>Beta-globin</fullName>
    </alternativeName>
    <alternativeName>
        <fullName>Hemoglobin beta chain</fullName>
    </alternativeName>
</protein>
<keyword id="KW-0002">3D-structure</keyword>
<keyword id="KW-0007">Acetylation</keyword>
<keyword id="KW-0903">Direct protein sequencing</keyword>
<keyword id="KW-0349">Heme</keyword>
<keyword id="KW-0408">Iron</keyword>
<keyword id="KW-0479">Metal-binding</keyword>
<keyword id="KW-0561">Oxygen transport</keyword>
<keyword id="KW-1185">Reference proteome</keyword>
<keyword id="KW-0702">S-nitrosylation</keyword>
<keyword id="KW-0813">Transport</keyword>
<feature type="chain" id="PRO_0000052915" description="Hemoglobin subunit beta">
    <location>
        <begin position="1"/>
        <end position="146"/>
    </location>
</feature>
<feature type="domain" description="Globin" evidence="3">
    <location>
        <begin position="2"/>
        <end position="146"/>
    </location>
</feature>
<feature type="binding site" description="distal binding residue">
    <location>
        <position position="63"/>
    </location>
    <ligand>
        <name>heme b</name>
        <dbReference type="ChEBI" id="CHEBI:60344"/>
    </ligand>
    <ligandPart>
        <name>Fe</name>
        <dbReference type="ChEBI" id="CHEBI:18248"/>
    </ligandPart>
</feature>
<feature type="binding site" description="proximal binding residue">
    <location>
        <position position="92"/>
    </location>
    <ligand>
        <name>heme b</name>
        <dbReference type="ChEBI" id="CHEBI:60344"/>
    </ligand>
    <ligandPart>
        <name>Fe</name>
        <dbReference type="ChEBI" id="CHEBI:18248"/>
    </ligandPart>
</feature>
<feature type="modified residue" description="N-acetylvaline" evidence="1">
    <location>
        <position position="1"/>
    </location>
</feature>
<feature type="modified residue" description="N6-acetyllysine" evidence="2">
    <location>
        <position position="82"/>
    </location>
</feature>
<feature type="modified residue" description="S-nitrosocysteine" evidence="2">
    <location>
        <position position="93"/>
    </location>
</feature>
<feature type="modified residue" description="N6-acetyllysine" evidence="2">
    <location>
        <position position="144"/>
    </location>
</feature>
<feature type="helix" evidence="6">
    <location>
        <begin position="5"/>
        <end position="15"/>
    </location>
</feature>
<feature type="helix" evidence="6">
    <location>
        <begin position="20"/>
        <end position="34"/>
    </location>
</feature>
<feature type="helix" evidence="6">
    <location>
        <begin position="36"/>
        <end position="45"/>
    </location>
</feature>
<feature type="helix" evidence="6">
    <location>
        <begin position="51"/>
        <end position="56"/>
    </location>
</feature>
<feature type="helix" evidence="6">
    <location>
        <begin position="58"/>
        <end position="74"/>
    </location>
</feature>
<feature type="helix" evidence="5">
    <location>
        <begin position="75"/>
        <end position="80"/>
    </location>
</feature>
<feature type="helix" evidence="6">
    <location>
        <begin position="81"/>
        <end position="84"/>
    </location>
</feature>
<feature type="helix" evidence="6">
    <location>
        <begin position="86"/>
        <end position="94"/>
    </location>
</feature>
<feature type="helix" evidence="6">
    <location>
        <begin position="101"/>
        <end position="117"/>
    </location>
</feature>
<feature type="turn" evidence="6">
    <location>
        <begin position="119"/>
        <end position="121"/>
    </location>
</feature>
<feature type="helix" evidence="6">
    <location>
        <begin position="124"/>
        <end position="141"/>
    </location>
</feature>
<feature type="helix" evidence="6">
    <location>
        <begin position="143"/>
        <end position="145"/>
    </location>
</feature>
<proteinExistence type="evidence at protein level"/>
<evidence type="ECO:0000250" key="1">
    <source>
        <dbReference type="UniProtKB" id="P02086"/>
    </source>
</evidence>
<evidence type="ECO:0000250" key="2">
    <source>
        <dbReference type="UniProtKB" id="P68871"/>
    </source>
</evidence>
<evidence type="ECO:0000255" key="3">
    <source>
        <dbReference type="PROSITE-ProRule" id="PRU00238"/>
    </source>
</evidence>
<evidence type="ECO:0000269" key="4">
    <source>
    </source>
</evidence>
<evidence type="ECO:0007829" key="5">
    <source>
        <dbReference type="PDB" id="3A0G"/>
    </source>
</evidence>
<evidence type="ECO:0007829" key="6">
    <source>
        <dbReference type="PDB" id="3HYU"/>
    </source>
</evidence>
<organism>
    <name type="scientific">Cavia porcellus</name>
    <name type="common">Guinea pig</name>
    <dbReference type="NCBI Taxonomy" id="10141"/>
    <lineage>
        <taxon>Eukaryota</taxon>
        <taxon>Metazoa</taxon>
        <taxon>Chordata</taxon>
        <taxon>Craniata</taxon>
        <taxon>Vertebrata</taxon>
        <taxon>Euteleostomi</taxon>
        <taxon>Mammalia</taxon>
        <taxon>Eutheria</taxon>
        <taxon>Euarchontoglires</taxon>
        <taxon>Glires</taxon>
        <taxon>Rodentia</taxon>
        <taxon>Hystricomorpha</taxon>
        <taxon>Caviidae</taxon>
        <taxon>Cavia</taxon>
    </lineage>
</organism>
<reference key="1">
    <citation type="journal article" date="1979" name="Hoppe-Seyler's Z. Physiol. Chem.">
        <title>Respiration at high altitudes, phosphate-protein interaction: the sequence of hemoglobins from guinea pig and dromedary.</title>
        <authorList>
            <person name="Braunitzer G."/>
            <person name="Schrank B."/>
            <person name="Stangl A."/>
            <person name="Wiesner H."/>
        </authorList>
    </citation>
    <scope>PROTEIN SEQUENCE</scope>
</reference>
<reference key="2">
    <citation type="journal article" date="2010" name="PLoS ONE">
        <title>Structure of the altitude adapted hemoglobin of guinea pig in the R2-state.</title>
        <authorList>
            <person name="Pairet B."/>
            <person name="Jaenicke E."/>
        </authorList>
    </citation>
    <scope>X-RAY CRYSTALLOGRAPHY (1.67 ANGSTROMS)</scope>
    <scope>SUBUNIT</scope>
</reference>